<reference key="1">
    <citation type="submission" date="2002-12" db="EMBL/GenBank/DDBJ databases">
        <title>Complete genome sequence of Vibrio vulnificus CMCP6.</title>
        <authorList>
            <person name="Rhee J.H."/>
            <person name="Kim S.Y."/>
            <person name="Chung S.S."/>
            <person name="Kim J.J."/>
            <person name="Moon Y.H."/>
            <person name="Jeong H."/>
            <person name="Choy H.E."/>
        </authorList>
    </citation>
    <scope>NUCLEOTIDE SEQUENCE [LARGE SCALE GENOMIC DNA]</scope>
    <source>
        <strain>CMCP6</strain>
    </source>
</reference>
<name>RSMC_VIBVU</name>
<dbReference type="EC" id="2.1.1.172" evidence="1"/>
<dbReference type="EMBL" id="AE016795">
    <property type="protein sequence ID" value="AAO10092.1"/>
    <property type="molecule type" value="Genomic_DNA"/>
</dbReference>
<dbReference type="RefSeq" id="WP_011079595.1">
    <property type="nucleotide sequence ID" value="NC_004459.3"/>
</dbReference>
<dbReference type="SMR" id="Q8DBY0"/>
<dbReference type="KEGG" id="vvu:VV1_1675"/>
<dbReference type="HOGENOM" id="CLU_049581_0_1_6"/>
<dbReference type="Proteomes" id="UP000002275">
    <property type="component" value="Chromosome 1"/>
</dbReference>
<dbReference type="GO" id="GO:0005737">
    <property type="term" value="C:cytoplasm"/>
    <property type="evidence" value="ECO:0007669"/>
    <property type="project" value="UniProtKB-SubCell"/>
</dbReference>
<dbReference type="GO" id="GO:0052914">
    <property type="term" value="F:16S rRNA (guanine(1207)-N(2))-methyltransferase activity"/>
    <property type="evidence" value="ECO:0007669"/>
    <property type="project" value="UniProtKB-EC"/>
</dbReference>
<dbReference type="GO" id="GO:0003676">
    <property type="term" value="F:nucleic acid binding"/>
    <property type="evidence" value="ECO:0007669"/>
    <property type="project" value="InterPro"/>
</dbReference>
<dbReference type="CDD" id="cd02440">
    <property type="entry name" value="AdoMet_MTases"/>
    <property type="match status" value="1"/>
</dbReference>
<dbReference type="Gene3D" id="3.40.50.150">
    <property type="entry name" value="Vaccinia Virus protein VP39"/>
    <property type="match status" value="2"/>
</dbReference>
<dbReference type="HAMAP" id="MF_01862">
    <property type="entry name" value="16SrRNA_methyltr_C"/>
    <property type="match status" value="1"/>
</dbReference>
<dbReference type="InterPro" id="IPR002052">
    <property type="entry name" value="DNA_methylase_N6_adenine_CS"/>
</dbReference>
<dbReference type="InterPro" id="IPR013675">
    <property type="entry name" value="Mtase_sm_N"/>
</dbReference>
<dbReference type="InterPro" id="IPR023543">
    <property type="entry name" value="rRNA_ssu_MeTfrase_C"/>
</dbReference>
<dbReference type="InterPro" id="IPR046977">
    <property type="entry name" value="RsmC/RlmG"/>
</dbReference>
<dbReference type="InterPro" id="IPR029063">
    <property type="entry name" value="SAM-dependent_MTases_sf"/>
</dbReference>
<dbReference type="InterPro" id="IPR007848">
    <property type="entry name" value="Small_mtfrase_dom"/>
</dbReference>
<dbReference type="NCBIfam" id="NF007023">
    <property type="entry name" value="PRK09489.1"/>
    <property type="match status" value="1"/>
</dbReference>
<dbReference type="PANTHER" id="PTHR47816">
    <property type="entry name" value="RIBOSOMAL RNA SMALL SUBUNIT METHYLTRANSFERASE C"/>
    <property type="match status" value="1"/>
</dbReference>
<dbReference type="PANTHER" id="PTHR47816:SF4">
    <property type="entry name" value="RIBOSOMAL RNA SMALL SUBUNIT METHYLTRANSFERASE C"/>
    <property type="match status" value="1"/>
</dbReference>
<dbReference type="Pfam" id="PF05175">
    <property type="entry name" value="MTS"/>
    <property type="match status" value="1"/>
</dbReference>
<dbReference type="Pfam" id="PF08468">
    <property type="entry name" value="MTS_N"/>
    <property type="match status" value="1"/>
</dbReference>
<dbReference type="SUPFAM" id="SSF53335">
    <property type="entry name" value="S-adenosyl-L-methionine-dependent methyltransferases"/>
    <property type="match status" value="1"/>
</dbReference>
<accession>Q8DBY0</accession>
<protein>
    <recommendedName>
        <fullName evidence="1">Ribosomal RNA small subunit methyltransferase C</fullName>
        <ecNumber evidence="1">2.1.1.172</ecNumber>
    </recommendedName>
    <alternativeName>
        <fullName evidence="1">16S rRNA m2G1207 methyltransferase</fullName>
    </alternativeName>
    <alternativeName>
        <fullName evidence="1">rRNA (guanine-N(2)-)-methyltransferase RsmC</fullName>
    </alternativeName>
</protein>
<organism>
    <name type="scientific">Vibrio vulnificus (strain CMCP6)</name>
    <dbReference type="NCBI Taxonomy" id="216895"/>
    <lineage>
        <taxon>Bacteria</taxon>
        <taxon>Pseudomonadati</taxon>
        <taxon>Pseudomonadota</taxon>
        <taxon>Gammaproteobacteria</taxon>
        <taxon>Vibrionales</taxon>
        <taxon>Vibrionaceae</taxon>
        <taxon>Vibrio</taxon>
    </lineage>
</organism>
<sequence>MSAYTAPSQIAQRQLDYFNGKHVLVAGEVEDLFPLELAEHCESVSVFTSNYSYFRQIRAHSTITSYFGSQLEADSQADLLLLYWPKAKAEAEYLLAMLLAKLGSGCEIVVVGENRSGVKSIEKMFQAYGPVNKYDSARRCSFYWGQCNTQPNAFNQADWFRHYSINIHGQQLEIQSLPGVFSHGEFDLGSQLLLETLPSLSGKVLDFGCGAGVIGAFMAKRNPAIELEMCDINAYALASSEATLAANGLQGRVFASDIYSDTADDYRFIISNPPFHSGLDTNYKAAETLLGQAPQYLNKQGELIIVANSFLKYPPIIEQAFSNCATLNKTNKFSIYHASK</sequence>
<gene>
    <name evidence="1" type="primary">rsmC</name>
    <name type="ordered locus">VV1_1675</name>
</gene>
<keyword id="KW-0963">Cytoplasm</keyword>
<keyword id="KW-0489">Methyltransferase</keyword>
<keyword id="KW-0698">rRNA processing</keyword>
<keyword id="KW-0949">S-adenosyl-L-methionine</keyword>
<keyword id="KW-0808">Transferase</keyword>
<proteinExistence type="inferred from homology"/>
<feature type="chain" id="PRO_0000369797" description="Ribosomal RNA small subunit methyltransferase C">
    <location>
        <begin position="1"/>
        <end position="340"/>
    </location>
</feature>
<comment type="function">
    <text evidence="1">Specifically methylates the guanine in position 1207 of 16S rRNA in the 30S particle.</text>
</comment>
<comment type="catalytic activity">
    <reaction evidence="1">
        <text>guanosine(1207) in 16S rRNA + S-adenosyl-L-methionine = N(2)-methylguanosine(1207) in 16S rRNA + S-adenosyl-L-homocysteine + H(+)</text>
        <dbReference type="Rhea" id="RHEA:42736"/>
        <dbReference type="Rhea" id="RHEA-COMP:10213"/>
        <dbReference type="Rhea" id="RHEA-COMP:10214"/>
        <dbReference type="ChEBI" id="CHEBI:15378"/>
        <dbReference type="ChEBI" id="CHEBI:57856"/>
        <dbReference type="ChEBI" id="CHEBI:59789"/>
        <dbReference type="ChEBI" id="CHEBI:74269"/>
        <dbReference type="ChEBI" id="CHEBI:74481"/>
        <dbReference type="EC" id="2.1.1.172"/>
    </reaction>
</comment>
<comment type="subunit">
    <text evidence="1">Monomer.</text>
</comment>
<comment type="subcellular location">
    <subcellularLocation>
        <location evidence="1">Cytoplasm</location>
    </subcellularLocation>
</comment>
<comment type="similarity">
    <text evidence="1">Belongs to the methyltransferase superfamily. RsmC family.</text>
</comment>
<evidence type="ECO:0000255" key="1">
    <source>
        <dbReference type="HAMAP-Rule" id="MF_01862"/>
    </source>
</evidence>